<feature type="signal peptide" evidence="1">
    <location>
        <begin position="1"/>
        <end position="42"/>
    </location>
</feature>
<feature type="chain" id="PRO_0000000215" description="Diacylglycerol acyltransferase/mycolyltransferase Ag85A">
    <location>
        <begin position="43"/>
        <end position="337"/>
    </location>
</feature>
<feature type="region of interest" description="Fibronectin-binding">
    <location>
        <begin position="101"/>
        <end position="111"/>
    </location>
</feature>
<feature type="active site" description="Nucleophile" evidence="1">
    <location>
        <position position="169"/>
    </location>
</feature>
<feature type="active site" evidence="1">
    <location>
        <position position="273"/>
    </location>
</feature>
<feature type="active site" evidence="1">
    <location>
        <position position="305"/>
    </location>
</feature>
<feature type="binding site" evidence="1">
    <location>
        <begin position="85"/>
        <end position="86"/>
    </location>
    <ligand>
        <name>substrate</name>
    </ligand>
</feature>
<feature type="binding site" evidence="1">
    <location>
        <position position="169"/>
    </location>
    <ligand>
        <name>substrate</name>
    </ligand>
</feature>
<feature type="binding site" evidence="1">
    <location>
        <position position="197"/>
    </location>
    <ligand>
        <name>substrate</name>
    </ligand>
</feature>
<feature type="binding site" evidence="1">
    <location>
        <begin position="275"/>
        <end position="278"/>
    </location>
    <ligand>
        <name>substrate</name>
    </ligand>
</feature>
<feature type="binding site" evidence="1">
    <location>
        <position position="282"/>
    </location>
    <ligand>
        <name>substrate</name>
    </ligand>
</feature>
<feature type="binding site" evidence="1">
    <location>
        <begin position="305"/>
        <end position="307"/>
    </location>
    <ligand>
        <name>substrate</name>
    </ligand>
</feature>
<feature type="disulfide bond" evidence="1">
    <location>
        <begin position="130"/>
        <end position="135"/>
    </location>
</feature>
<organism>
    <name type="scientific">Mycobacterium ulcerans</name>
    <dbReference type="NCBI Taxonomy" id="1809"/>
    <lineage>
        <taxon>Bacteria</taxon>
        <taxon>Bacillati</taxon>
        <taxon>Actinomycetota</taxon>
        <taxon>Actinomycetes</taxon>
        <taxon>Mycobacteriales</taxon>
        <taxon>Mycobacteriaceae</taxon>
        <taxon>Mycobacterium</taxon>
        <taxon>Mycobacterium ulcerans group</taxon>
    </lineage>
</organism>
<dbReference type="EC" id="2.3.1.122"/>
<dbReference type="EC" id="2.3.1.20"/>
<dbReference type="EMBL" id="AJ300576">
    <property type="protein sequence ID" value="CAC40861.1"/>
    <property type="molecule type" value="Genomic_DNA"/>
</dbReference>
<dbReference type="RefSeq" id="WP_011742456.1">
    <property type="nucleotide sequence ID" value="NZ_MDUB01000111.1"/>
</dbReference>
<dbReference type="SMR" id="P58248"/>
<dbReference type="ESTHER" id="mycul-a85a">
    <property type="family name" value="A85-Mycolyl-transferase"/>
</dbReference>
<dbReference type="OMA" id="MRAQDDF"/>
<dbReference type="GO" id="GO:0005737">
    <property type="term" value="C:cytoplasm"/>
    <property type="evidence" value="ECO:0007669"/>
    <property type="project" value="UniProtKB-SubCell"/>
</dbReference>
<dbReference type="GO" id="GO:0005576">
    <property type="term" value="C:extracellular region"/>
    <property type="evidence" value="ECO:0007669"/>
    <property type="project" value="UniProtKB-KW"/>
</dbReference>
<dbReference type="GO" id="GO:0004144">
    <property type="term" value="F:diacylglycerol O-acyltransferase activity"/>
    <property type="evidence" value="ECO:0007669"/>
    <property type="project" value="UniProtKB-EC"/>
</dbReference>
<dbReference type="GO" id="GO:0050348">
    <property type="term" value="F:trehalose O-mycolyltransferase activity"/>
    <property type="evidence" value="ECO:0007669"/>
    <property type="project" value="UniProtKB-EC"/>
</dbReference>
<dbReference type="FunFam" id="3.40.50.1820:FF:000086">
    <property type="entry name" value="Diacylglycerol acyltransferase/mycolyltransferase Ag85C"/>
    <property type="match status" value="1"/>
</dbReference>
<dbReference type="Gene3D" id="3.40.50.1820">
    <property type="entry name" value="alpha/beta hydrolase"/>
    <property type="match status" value="1"/>
</dbReference>
<dbReference type="InterPro" id="IPR029058">
    <property type="entry name" value="AB_hydrolase_fold"/>
</dbReference>
<dbReference type="InterPro" id="IPR000801">
    <property type="entry name" value="Esterase-like"/>
</dbReference>
<dbReference type="InterPro" id="IPR050583">
    <property type="entry name" value="Mycobacterial_A85_antigen"/>
</dbReference>
<dbReference type="InterPro" id="IPR006311">
    <property type="entry name" value="TAT_signal"/>
</dbReference>
<dbReference type="PANTHER" id="PTHR48098:SF1">
    <property type="entry name" value="DIACYLGLYCEROL ACYLTRANSFERASE_MYCOLYLTRANSFERASE AG85A"/>
    <property type="match status" value="1"/>
</dbReference>
<dbReference type="PANTHER" id="PTHR48098">
    <property type="entry name" value="ENTEROCHELIN ESTERASE-RELATED"/>
    <property type="match status" value="1"/>
</dbReference>
<dbReference type="Pfam" id="PF00756">
    <property type="entry name" value="Esterase"/>
    <property type="match status" value="1"/>
</dbReference>
<dbReference type="SUPFAM" id="SSF53474">
    <property type="entry name" value="alpha/beta-Hydrolases"/>
    <property type="match status" value="1"/>
</dbReference>
<comment type="function">
    <text evidence="1">The antigen 85 proteins (FbpA, FbpB, FbpC) are responsible for the high affinity of mycobacteria for fibronectin, a large adhesive glycoprotein, which facilitates the attachment of M.tuberculosis to murine alveolar macrophages (AMs). They also help to maintain the integrity of the cell wall by catalyzing the transfer of mycolic acids to cell wall arabinogalactan, and through the synthesis of alpha,alpha-trehalose dimycolate (TDM, cord factor). They catalyze the transfer of a mycoloyl residue from one molecule of alpha,alpha-trehalose monomycolate (TMM) to another TMM, leading to the formation of TDM. FbpA mediates triacylglycerol (TAG) formation with long-chain acyl-CoA as the acyl donor and 1,2-dipalmitoyl-sn-glycerol (1,2-dipalmitin) as the acyl acceptor. It has a preference for C26:0-CoA over C18:1-CoA (By similarity).</text>
</comment>
<comment type="catalytic activity">
    <reaction>
        <text>an acyl-CoA + a 1,2-diacyl-sn-glycerol = a triacyl-sn-glycerol + CoA</text>
        <dbReference type="Rhea" id="RHEA:10868"/>
        <dbReference type="ChEBI" id="CHEBI:17815"/>
        <dbReference type="ChEBI" id="CHEBI:57287"/>
        <dbReference type="ChEBI" id="CHEBI:58342"/>
        <dbReference type="ChEBI" id="CHEBI:64615"/>
        <dbReference type="EC" id="2.3.1.20"/>
    </reaction>
</comment>
<comment type="catalytic activity">
    <reaction>
        <text>2 alpha,alpha'-trehalose 6-mycolate = alpha,alpha'-trehalose 6,6'-bismycolate + alpha,alpha-trehalose</text>
        <dbReference type="Rhea" id="RHEA:23472"/>
        <dbReference type="ChEBI" id="CHEBI:16551"/>
        <dbReference type="ChEBI" id="CHEBI:18195"/>
        <dbReference type="ChEBI" id="CHEBI:18234"/>
        <dbReference type="EC" id="2.3.1.122"/>
    </reaction>
</comment>
<comment type="subunit">
    <text evidence="1">Homodimer.</text>
</comment>
<comment type="subcellular location">
    <subcellularLocation>
        <location>Secreted</location>
        <location>Cell wall</location>
    </subcellularLocation>
    <subcellularLocation>
        <location>Cytoplasm</location>
    </subcellularLocation>
</comment>
<comment type="similarity">
    <text evidence="2">Belongs to the mycobacterial A85 antigen family.</text>
</comment>
<gene>
    <name type="primary">fbpA</name>
</gene>
<reference key="1">
    <citation type="thesis" date="2001" institute="Universite Libre de Bruxelles" country="Belgium">
        <title>Protective efficacy of DNA vaccine encoding antigen 85A from M. bovis BCG against Buruli Ulcer.</title>
        <authorList>
            <person name="Tanghe A.J."/>
        </authorList>
    </citation>
    <scope>NUCLEOTIDE SEQUENCE [GENOMIC DNA]</scope>
    <source>
        <strain>ITM 5150</strain>
    </source>
</reference>
<sequence>MKLVDRFRGAATGTSRRLMVGAVGAALLSGLVGFVGGSATASAFSRPGLPVEYLQVPSVAMGRNIKVQFQSGGANSPALYLLDGMRAQDDFSGWDINTPAFEWYYQSGISVAMPVGGQSSFYSDWYNPACGKAGCTTYKWETFLTSELPQYLSANKGVKPTGSGVVGLSMAGSSALILAAYHPDQFVYSGSLSALLDPSQGIGPSLIGLAMGDAGGYKASDMWGPKDDPAWARNDPMLQVGKLVANNTRIWVYCGNGKPSDLGGDNLPAKFLEGFVRTSNMKFQAAYNAAGGHNAVWNFDDNGTHSWEYWGAQLNAMRPDLQHTLGATPNTGDTQGA</sequence>
<accession>P58248</accession>
<evidence type="ECO:0000250" key="1"/>
<evidence type="ECO:0000305" key="2"/>
<name>A85A_MYCUL</name>
<keyword id="KW-0012">Acyltransferase</keyword>
<keyword id="KW-0134">Cell wall</keyword>
<keyword id="KW-0963">Cytoplasm</keyword>
<keyword id="KW-1015">Disulfide bond</keyword>
<keyword id="KW-0964">Secreted</keyword>
<keyword id="KW-0732">Signal</keyword>
<keyword id="KW-0808">Transferase</keyword>
<proteinExistence type="inferred from homology"/>
<protein>
    <recommendedName>
        <fullName>Diacylglycerol acyltransferase/mycolyltransferase Ag85A</fullName>
        <shortName>DGAT</shortName>
        <ecNumber>2.3.1.122</ecNumber>
        <ecNumber>2.3.1.20</ecNumber>
    </recommendedName>
    <alternativeName>
        <fullName>Acyl-CoA:diacylglycerol acyltransferase</fullName>
    </alternativeName>
    <alternativeName>
        <fullName>Antigen 85 complex A</fullName>
        <shortName>85A</shortName>
        <shortName>Ag85A</shortName>
    </alternativeName>
    <alternativeName>
        <fullName>Fibronectin-binding protein A</fullName>
        <shortName>Fbps A</shortName>
    </alternativeName>
</protein>